<gene>
    <name type="primary">Mccc2</name>
</gene>
<evidence type="ECO:0000250" key="1"/>
<evidence type="ECO:0000255" key="2"/>
<evidence type="ECO:0000255" key="3">
    <source>
        <dbReference type="PROSITE-ProRule" id="PRU01136"/>
    </source>
</evidence>
<evidence type="ECO:0000255" key="4">
    <source>
        <dbReference type="PROSITE-ProRule" id="PRU01137"/>
    </source>
</evidence>
<evidence type="ECO:0000255" key="5">
    <source>
        <dbReference type="PROSITE-ProRule" id="PRU01138"/>
    </source>
</evidence>
<evidence type="ECO:0000305" key="6"/>
<evidence type="ECO:0007744" key="7">
    <source>
    </source>
</evidence>
<evidence type="ECO:0007744" key="8">
    <source>
    </source>
</evidence>
<protein>
    <recommendedName>
        <fullName>Methylcrotonoyl-CoA carboxylase beta chain, mitochondrial</fullName>
        <shortName>MCCase subunit beta</shortName>
        <ecNumber>6.4.1.4</ecNumber>
    </recommendedName>
    <alternativeName>
        <fullName>3-methylcrotonyl-CoA carboxylase 2</fullName>
    </alternativeName>
    <alternativeName>
        <fullName>3-methylcrotonyl-CoA carboxylase non-biotin-containing subunit</fullName>
    </alternativeName>
    <alternativeName>
        <fullName>3-methylcrotonyl-CoA:carbon dioxide ligase subunit beta</fullName>
    </alternativeName>
</protein>
<accession>Q3ULD5</accession>
<accession>Q3UPS6</accession>
<keyword id="KW-0007">Acetylation</keyword>
<keyword id="KW-0067">ATP-binding</keyword>
<keyword id="KW-0436">Ligase</keyword>
<keyword id="KW-0496">Mitochondrion</keyword>
<keyword id="KW-0547">Nucleotide-binding</keyword>
<keyword id="KW-1185">Reference proteome</keyword>
<keyword id="KW-0809">Transit peptide</keyword>
<proteinExistence type="evidence at protein level"/>
<sequence>MWGALRSALRPCCRAAVPPQRAYHGDSVARLGTQPDSASSTYQENYEQMKALVSQLHERAQYVRLGGSEKARARHTSRGKLLPRDRIDNLIDPGSPFLEFSQFAGYQLYGDEEVPAGGIITGIGRVSGVECMIVANDATVKGGTYYPVTVKKHVRAQEIALQNRLPCIYLVDSGGANLPRQADTFPDRDHFGRIFYNQAIMSSKNITQIAVVMGSCTAGGAYVPAMADENIIVQKQGTIFLAGPPLVKAATGEEVSAEDLGGADLHCRKSGVTDHYALDDHHALHLTRKVVRSLNYQKKMDVTIEPSEEPLFPADELYGIVGANLKRSFDVREVIARIVDGSRFNEFKALYGDTLVTGFARIFGYPVGIIGNNGVLFSESAKKGAHFVQLCCQRNIPLLFLQNITGFMVGRDYEAEGIAKDGAKMVAAVACAKVPKITVIIGGSYGAGNYGMCGRAYSPRFLYMWPNARISVMGGEQAATVLATVARDQKAREGKQFSSAEEAALKEPIIKRFEEEGNPYYSSARLWDDGIIDPVDTRLVLGLSLSAALNAPIQRTDFGIFRM</sequence>
<name>MCCB_MOUSE</name>
<comment type="function">
    <text evidence="1">Carboxyltransferase subunit of the 3-methylcrotonyl-CoA carboxylase, an enzyme that catalyzes the conversion of 3-methylcrotonyl-CoA to 3-methylglutaconyl-CoA, a critical step for leucine and isovaleric acid catabolism.</text>
</comment>
<comment type="catalytic activity">
    <reaction>
        <text>3-methylbut-2-enoyl-CoA + hydrogencarbonate + ATP = 3-methyl-(2E)-glutaconyl-CoA + ADP + phosphate + H(+)</text>
        <dbReference type="Rhea" id="RHEA:13589"/>
        <dbReference type="ChEBI" id="CHEBI:15378"/>
        <dbReference type="ChEBI" id="CHEBI:17544"/>
        <dbReference type="ChEBI" id="CHEBI:30616"/>
        <dbReference type="ChEBI" id="CHEBI:43474"/>
        <dbReference type="ChEBI" id="CHEBI:57344"/>
        <dbReference type="ChEBI" id="CHEBI:57346"/>
        <dbReference type="ChEBI" id="CHEBI:456216"/>
        <dbReference type="EC" id="6.4.1.4"/>
    </reaction>
</comment>
<comment type="pathway">
    <text>Amino-acid degradation; L-leucine degradation; (S)-3-hydroxy-3-methylglutaryl-CoA from 3-isovaleryl-CoA: step 2/3.</text>
</comment>
<comment type="subunit">
    <text evidence="1">Probably a dodecamer composed of six biotin-containing alpha subunits (MCCC1) and six beta (MCCC2) subunits.</text>
</comment>
<comment type="subcellular location">
    <subcellularLocation>
        <location evidence="1">Mitochondrion matrix</location>
    </subcellularLocation>
</comment>
<comment type="similarity">
    <text evidence="6">Belongs to the AccD/PCCB family.</text>
</comment>
<organism>
    <name type="scientific">Mus musculus</name>
    <name type="common">Mouse</name>
    <dbReference type="NCBI Taxonomy" id="10090"/>
    <lineage>
        <taxon>Eukaryota</taxon>
        <taxon>Metazoa</taxon>
        <taxon>Chordata</taxon>
        <taxon>Craniata</taxon>
        <taxon>Vertebrata</taxon>
        <taxon>Euteleostomi</taxon>
        <taxon>Mammalia</taxon>
        <taxon>Eutheria</taxon>
        <taxon>Euarchontoglires</taxon>
        <taxon>Glires</taxon>
        <taxon>Rodentia</taxon>
        <taxon>Myomorpha</taxon>
        <taxon>Muroidea</taxon>
        <taxon>Muridae</taxon>
        <taxon>Murinae</taxon>
        <taxon>Mus</taxon>
        <taxon>Mus</taxon>
    </lineage>
</organism>
<feature type="transit peptide" description="Mitochondrion" evidence="1">
    <location>
        <begin position="1"/>
        <end position="22"/>
    </location>
</feature>
<feature type="chain" id="PRO_0000284068" description="Methylcrotonoyl-CoA carboxylase beta chain, mitochondrial">
    <location>
        <begin position="23"/>
        <end position="563"/>
    </location>
</feature>
<feature type="domain" description="CoA carboxyltransferase N-terminal" evidence="3">
    <location>
        <begin position="49"/>
        <end position="306"/>
    </location>
</feature>
<feature type="domain" description="CoA carboxyltransferase C-terminal" evidence="4">
    <location>
        <begin position="309"/>
        <end position="555"/>
    </location>
</feature>
<feature type="region of interest" description="Carboxyltransferase" evidence="5">
    <location>
        <begin position="49"/>
        <end position="555"/>
    </location>
</feature>
<feature type="region of interest" description="Acyl-CoA binding" evidence="2">
    <location>
        <begin position="343"/>
        <end position="372"/>
    </location>
</feature>
<feature type="modified residue" description="N6-acetyllysine; alternate" evidence="7">
    <location>
        <position position="70"/>
    </location>
</feature>
<feature type="modified residue" description="N6-succinyllysine; alternate" evidence="8">
    <location>
        <position position="70"/>
    </location>
</feature>
<feature type="modified residue" description="N6-succinyllysine" evidence="8">
    <location>
        <position position="141"/>
    </location>
</feature>
<feature type="modified residue" description="N6-succinyllysine" evidence="8">
    <location>
        <position position="433"/>
    </location>
</feature>
<feature type="modified residue" description="N6-acetyllysine; alternate" evidence="7">
    <location>
        <position position="495"/>
    </location>
</feature>
<feature type="modified residue" description="N6-succinyllysine; alternate" evidence="8">
    <location>
        <position position="495"/>
    </location>
</feature>
<feature type="modified residue" description="N6-acetyllysine" evidence="7">
    <location>
        <position position="511"/>
    </location>
</feature>
<feature type="sequence conflict" description="In Ref. 1; BAE25319." evidence="6" ref="1">
    <original>P</original>
    <variation>R</variation>
    <location>
        <position position="115"/>
    </location>
</feature>
<reference key="1">
    <citation type="journal article" date="2005" name="Science">
        <title>The transcriptional landscape of the mammalian genome.</title>
        <authorList>
            <person name="Carninci P."/>
            <person name="Kasukawa T."/>
            <person name="Katayama S."/>
            <person name="Gough J."/>
            <person name="Frith M.C."/>
            <person name="Maeda N."/>
            <person name="Oyama R."/>
            <person name="Ravasi T."/>
            <person name="Lenhard B."/>
            <person name="Wells C."/>
            <person name="Kodzius R."/>
            <person name="Shimokawa K."/>
            <person name="Bajic V.B."/>
            <person name="Brenner S.E."/>
            <person name="Batalov S."/>
            <person name="Forrest A.R."/>
            <person name="Zavolan M."/>
            <person name="Davis M.J."/>
            <person name="Wilming L.G."/>
            <person name="Aidinis V."/>
            <person name="Allen J.E."/>
            <person name="Ambesi-Impiombato A."/>
            <person name="Apweiler R."/>
            <person name="Aturaliya R.N."/>
            <person name="Bailey T.L."/>
            <person name="Bansal M."/>
            <person name="Baxter L."/>
            <person name="Beisel K.W."/>
            <person name="Bersano T."/>
            <person name="Bono H."/>
            <person name="Chalk A.M."/>
            <person name="Chiu K.P."/>
            <person name="Choudhary V."/>
            <person name="Christoffels A."/>
            <person name="Clutterbuck D.R."/>
            <person name="Crowe M.L."/>
            <person name="Dalla E."/>
            <person name="Dalrymple B.P."/>
            <person name="de Bono B."/>
            <person name="Della Gatta G."/>
            <person name="di Bernardo D."/>
            <person name="Down T."/>
            <person name="Engstrom P."/>
            <person name="Fagiolini M."/>
            <person name="Faulkner G."/>
            <person name="Fletcher C.F."/>
            <person name="Fukushima T."/>
            <person name="Furuno M."/>
            <person name="Futaki S."/>
            <person name="Gariboldi M."/>
            <person name="Georgii-Hemming P."/>
            <person name="Gingeras T.R."/>
            <person name="Gojobori T."/>
            <person name="Green R.E."/>
            <person name="Gustincich S."/>
            <person name="Harbers M."/>
            <person name="Hayashi Y."/>
            <person name="Hensch T.K."/>
            <person name="Hirokawa N."/>
            <person name="Hill D."/>
            <person name="Huminiecki L."/>
            <person name="Iacono M."/>
            <person name="Ikeo K."/>
            <person name="Iwama A."/>
            <person name="Ishikawa T."/>
            <person name="Jakt M."/>
            <person name="Kanapin A."/>
            <person name="Katoh M."/>
            <person name="Kawasawa Y."/>
            <person name="Kelso J."/>
            <person name="Kitamura H."/>
            <person name="Kitano H."/>
            <person name="Kollias G."/>
            <person name="Krishnan S.P."/>
            <person name="Kruger A."/>
            <person name="Kummerfeld S.K."/>
            <person name="Kurochkin I.V."/>
            <person name="Lareau L.F."/>
            <person name="Lazarevic D."/>
            <person name="Lipovich L."/>
            <person name="Liu J."/>
            <person name="Liuni S."/>
            <person name="McWilliam S."/>
            <person name="Madan Babu M."/>
            <person name="Madera M."/>
            <person name="Marchionni L."/>
            <person name="Matsuda H."/>
            <person name="Matsuzawa S."/>
            <person name="Miki H."/>
            <person name="Mignone F."/>
            <person name="Miyake S."/>
            <person name="Morris K."/>
            <person name="Mottagui-Tabar S."/>
            <person name="Mulder N."/>
            <person name="Nakano N."/>
            <person name="Nakauchi H."/>
            <person name="Ng P."/>
            <person name="Nilsson R."/>
            <person name="Nishiguchi S."/>
            <person name="Nishikawa S."/>
            <person name="Nori F."/>
            <person name="Ohara O."/>
            <person name="Okazaki Y."/>
            <person name="Orlando V."/>
            <person name="Pang K.C."/>
            <person name="Pavan W.J."/>
            <person name="Pavesi G."/>
            <person name="Pesole G."/>
            <person name="Petrovsky N."/>
            <person name="Piazza S."/>
            <person name="Reed J."/>
            <person name="Reid J.F."/>
            <person name="Ring B.Z."/>
            <person name="Ringwald M."/>
            <person name="Rost B."/>
            <person name="Ruan Y."/>
            <person name="Salzberg S.L."/>
            <person name="Sandelin A."/>
            <person name="Schneider C."/>
            <person name="Schoenbach C."/>
            <person name="Sekiguchi K."/>
            <person name="Semple C.A."/>
            <person name="Seno S."/>
            <person name="Sessa L."/>
            <person name="Sheng Y."/>
            <person name="Shibata Y."/>
            <person name="Shimada H."/>
            <person name="Shimada K."/>
            <person name="Silva D."/>
            <person name="Sinclair B."/>
            <person name="Sperling S."/>
            <person name="Stupka E."/>
            <person name="Sugiura K."/>
            <person name="Sultana R."/>
            <person name="Takenaka Y."/>
            <person name="Taki K."/>
            <person name="Tammoja K."/>
            <person name="Tan S.L."/>
            <person name="Tang S."/>
            <person name="Taylor M.S."/>
            <person name="Tegner J."/>
            <person name="Teichmann S.A."/>
            <person name="Ueda H.R."/>
            <person name="van Nimwegen E."/>
            <person name="Verardo R."/>
            <person name="Wei C.L."/>
            <person name="Yagi K."/>
            <person name="Yamanishi H."/>
            <person name="Zabarovsky E."/>
            <person name="Zhu S."/>
            <person name="Zimmer A."/>
            <person name="Hide W."/>
            <person name="Bult C."/>
            <person name="Grimmond S.M."/>
            <person name="Teasdale R.D."/>
            <person name="Liu E.T."/>
            <person name="Brusic V."/>
            <person name="Quackenbush J."/>
            <person name="Wahlestedt C."/>
            <person name="Mattick J.S."/>
            <person name="Hume D.A."/>
            <person name="Kai C."/>
            <person name="Sasaki D."/>
            <person name="Tomaru Y."/>
            <person name="Fukuda S."/>
            <person name="Kanamori-Katayama M."/>
            <person name="Suzuki M."/>
            <person name="Aoki J."/>
            <person name="Arakawa T."/>
            <person name="Iida J."/>
            <person name="Imamura K."/>
            <person name="Itoh M."/>
            <person name="Kato T."/>
            <person name="Kawaji H."/>
            <person name="Kawagashira N."/>
            <person name="Kawashima T."/>
            <person name="Kojima M."/>
            <person name="Kondo S."/>
            <person name="Konno H."/>
            <person name="Nakano K."/>
            <person name="Ninomiya N."/>
            <person name="Nishio T."/>
            <person name="Okada M."/>
            <person name="Plessy C."/>
            <person name="Shibata K."/>
            <person name="Shiraki T."/>
            <person name="Suzuki S."/>
            <person name="Tagami M."/>
            <person name="Waki K."/>
            <person name="Watahiki A."/>
            <person name="Okamura-Oho Y."/>
            <person name="Suzuki H."/>
            <person name="Kawai J."/>
            <person name="Hayashizaki Y."/>
        </authorList>
    </citation>
    <scope>NUCLEOTIDE SEQUENCE [LARGE SCALE MRNA]</scope>
    <source>
        <strain>C57BL/6J</strain>
        <tissue>Liver</tissue>
        <tissue>Oviduct</tissue>
        <tissue>Placenta</tissue>
        <tissue>Stomach</tissue>
    </source>
</reference>
<reference key="2">
    <citation type="journal article" date="2010" name="Cell">
        <title>A tissue-specific atlas of mouse protein phosphorylation and expression.</title>
        <authorList>
            <person name="Huttlin E.L."/>
            <person name="Jedrychowski M.P."/>
            <person name="Elias J.E."/>
            <person name="Goswami T."/>
            <person name="Rad R."/>
            <person name="Beausoleil S.A."/>
            <person name="Villen J."/>
            <person name="Haas W."/>
            <person name="Sowa M.E."/>
            <person name="Gygi S.P."/>
        </authorList>
    </citation>
    <scope>IDENTIFICATION BY MASS SPECTROMETRY [LARGE SCALE ANALYSIS]</scope>
    <source>
        <tissue>Brain</tissue>
        <tissue>Brown adipose tissue</tissue>
        <tissue>Heart</tissue>
        <tissue>Kidney</tissue>
        <tissue>Liver</tissue>
        <tissue>Lung</tissue>
        <tissue>Pancreas</tissue>
        <tissue>Spleen</tissue>
        <tissue>Testis</tissue>
    </source>
</reference>
<reference key="3">
    <citation type="journal article" date="2013" name="Mol. Cell">
        <title>SIRT5-mediated lysine desuccinylation impacts diverse metabolic pathways.</title>
        <authorList>
            <person name="Park J."/>
            <person name="Chen Y."/>
            <person name="Tishkoff D.X."/>
            <person name="Peng C."/>
            <person name="Tan M."/>
            <person name="Dai L."/>
            <person name="Xie Z."/>
            <person name="Zhang Y."/>
            <person name="Zwaans B.M."/>
            <person name="Skinner M.E."/>
            <person name="Lombard D.B."/>
            <person name="Zhao Y."/>
        </authorList>
    </citation>
    <scope>SUCCINYLATION [LARGE SCALE ANALYSIS] AT LYS-70; LYS-141; LYS-433 AND LYS-495</scope>
    <scope>IDENTIFICATION BY MASS SPECTROMETRY [LARGE SCALE ANALYSIS]</scope>
    <source>
        <tissue>Liver</tissue>
    </source>
</reference>
<reference key="4">
    <citation type="journal article" date="2013" name="Proc. Natl. Acad. Sci. U.S.A.">
        <title>Label-free quantitative proteomics of the lysine acetylome in mitochondria identifies substrates of SIRT3 in metabolic pathways.</title>
        <authorList>
            <person name="Rardin M.J."/>
            <person name="Newman J.C."/>
            <person name="Held J.M."/>
            <person name="Cusack M.P."/>
            <person name="Sorensen D.J."/>
            <person name="Li B."/>
            <person name="Schilling B."/>
            <person name="Mooney S.D."/>
            <person name="Kahn C.R."/>
            <person name="Verdin E."/>
            <person name="Gibson B.W."/>
        </authorList>
    </citation>
    <scope>ACETYLATION [LARGE SCALE ANALYSIS] AT LYS-70; LYS-495 AND LYS-511</scope>
    <scope>IDENTIFICATION BY MASS SPECTROMETRY [LARGE SCALE ANALYSIS]</scope>
    <source>
        <tissue>Liver</tissue>
    </source>
</reference>
<dbReference type="EC" id="6.4.1.4"/>
<dbReference type="EMBL" id="AK132265">
    <property type="protein sequence ID" value="BAE21068.1"/>
    <property type="molecule type" value="mRNA"/>
</dbReference>
<dbReference type="EMBL" id="AK143233">
    <property type="protein sequence ID" value="BAE25319.1"/>
    <property type="molecule type" value="mRNA"/>
</dbReference>
<dbReference type="EMBL" id="AK145564">
    <property type="protein sequence ID" value="BAE26513.1"/>
    <property type="molecule type" value="mRNA"/>
</dbReference>
<dbReference type="EMBL" id="AK146865">
    <property type="protein sequence ID" value="BAE27489.1"/>
    <property type="molecule type" value="mRNA"/>
</dbReference>
<dbReference type="EMBL" id="AK146844">
    <property type="protein sequence ID" value="BAE27475.1"/>
    <property type="molecule type" value="mRNA"/>
</dbReference>
<dbReference type="CCDS" id="CCDS36764.1"/>
<dbReference type="RefSeq" id="NP_084302.1">
    <property type="nucleotide sequence ID" value="NM_030026.2"/>
</dbReference>
<dbReference type="SMR" id="Q3ULD5"/>
<dbReference type="BioGRID" id="219115">
    <property type="interactions" value="19"/>
</dbReference>
<dbReference type="FunCoup" id="Q3ULD5">
    <property type="interactions" value="2189"/>
</dbReference>
<dbReference type="IntAct" id="Q3ULD5">
    <property type="interactions" value="9"/>
</dbReference>
<dbReference type="MINT" id="Q3ULD5"/>
<dbReference type="STRING" id="10090.ENSMUSP00000022148"/>
<dbReference type="GlyGen" id="Q3ULD5">
    <property type="glycosylation" value="1 site, 1 O-linked glycan (1 site)"/>
</dbReference>
<dbReference type="iPTMnet" id="Q3ULD5"/>
<dbReference type="PhosphoSitePlus" id="Q3ULD5"/>
<dbReference type="SwissPalm" id="Q3ULD5"/>
<dbReference type="jPOST" id="Q3ULD5"/>
<dbReference type="PaxDb" id="10090-ENSMUSP00000022148"/>
<dbReference type="ProteomicsDB" id="295977"/>
<dbReference type="Pumba" id="Q3ULD5"/>
<dbReference type="Antibodypedia" id="24162">
    <property type="antibodies" value="275 antibodies from 30 providers"/>
</dbReference>
<dbReference type="DNASU" id="78038"/>
<dbReference type="Ensembl" id="ENSMUST00000022148.7">
    <property type="protein sequence ID" value="ENSMUSP00000022148.7"/>
    <property type="gene ID" value="ENSMUSG00000021646.10"/>
</dbReference>
<dbReference type="GeneID" id="78038"/>
<dbReference type="KEGG" id="mmu:78038"/>
<dbReference type="UCSC" id="uc007rpz.1">
    <property type="organism name" value="mouse"/>
</dbReference>
<dbReference type="AGR" id="MGI:1925288"/>
<dbReference type="CTD" id="64087"/>
<dbReference type="MGI" id="MGI:1925288">
    <property type="gene designation" value="Mccc2"/>
</dbReference>
<dbReference type="VEuPathDB" id="HostDB:ENSMUSG00000021646"/>
<dbReference type="eggNOG" id="KOG0540">
    <property type="taxonomic scope" value="Eukaryota"/>
</dbReference>
<dbReference type="GeneTree" id="ENSGT00940000155949"/>
<dbReference type="HOGENOM" id="CLU_018822_0_1_1"/>
<dbReference type="InParanoid" id="Q3ULD5"/>
<dbReference type="OMA" id="GATTHCE"/>
<dbReference type="OrthoDB" id="439921at2759"/>
<dbReference type="PhylomeDB" id="Q3ULD5"/>
<dbReference type="TreeFam" id="TF300446"/>
<dbReference type="Reactome" id="R-MMU-196780">
    <property type="pathway name" value="Biotin transport and metabolism"/>
</dbReference>
<dbReference type="Reactome" id="R-MMU-70895">
    <property type="pathway name" value="Branched-chain amino acid catabolism"/>
</dbReference>
<dbReference type="UniPathway" id="UPA00363">
    <property type="reaction ID" value="UER00861"/>
</dbReference>
<dbReference type="BioGRID-ORCS" id="78038">
    <property type="hits" value="3 hits in 80 CRISPR screens"/>
</dbReference>
<dbReference type="CD-CODE" id="CE726F99">
    <property type="entry name" value="Postsynaptic density"/>
</dbReference>
<dbReference type="ChiTaRS" id="Mccc2">
    <property type="organism name" value="mouse"/>
</dbReference>
<dbReference type="PRO" id="PR:Q3ULD5"/>
<dbReference type="Proteomes" id="UP000000589">
    <property type="component" value="Chromosome 13"/>
</dbReference>
<dbReference type="RNAct" id="Q3ULD5">
    <property type="molecule type" value="protein"/>
</dbReference>
<dbReference type="Bgee" id="ENSMUSG00000021646">
    <property type="expression patterns" value="Expressed in proximal tubule and 233 other cell types or tissues"/>
</dbReference>
<dbReference type="ExpressionAtlas" id="Q3ULD5">
    <property type="expression patterns" value="baseline and differential"/>
</dbReference>
<dbReference type="GO" id="GO:1905202">
    <property type="term" value="C:methylcrotonoyl-CoA carboxylase complex"/>
    <property type="evidence" value="ECO:0000250"/>
    <property type="project" value="UniProtKB"/>
</dbReference>
<dbReference type="GO" id="GO:0005759">
    <property type="term" value="C:mitochondrial matrix"/>
    <property type="evidence" value="ECO:0007669"/>
    <property type="project" value="UniProtKB-SubCell"/>
</dbReference>
<dbReference type="GO" id="GO:0005739">
    <property type="term" value="C:mitochondrion"/>
    <property type="evidence" value="ECO:0007005"/>
    <property type="project" value="MGI"/>
</dbReference>
<dbReference type="GO" id="GO:0005524">
    <property type="term" value="F:ATP binding"/>
    <property type="evidence" value="ECO:0007669"/>
    <property type="project" value="UniProtKB-KW"/>
</dbReference>
<dbReference type="GO" id="GO:0004485">
    <property type="term" value="F:methylcrotonoyl-CoA carboxylase activity"/>
    <property type="evidence" value="ECO:0007669"/>
    <property type="project" value="UniProtKB-EC"/>
</dbReference>
<dbReference type="GO" id="GO:0015936">
    <property type="term" value="P:coenzyme A metabolic process"/>
    <property type="evidence" value="ECO:0007669"/>
    <property type="project" value="Ensembl"/>
</dbReference>
<dbReference type="GO" id="GO:0006552">
    <property type="term" value="P:L-leucine catabolic process"/>
    <property type="evidence" value="ECO:0007669"/>
    <property type="project" value="UniProtKB-UniPathway"/>
</dbReference>
<dbReference type="FunFam" id="3.90.226.10:FF:000004">
    <property type="entry name" value="Methylcrotonoyl-CoA carboxylase beta chain"/>
    <property type="match status" value="1"/>
</dbReference>
<dbReference type="FunFam" id="3.90.226.10:FF:000007">
    <property type="entry name" value="Methylcrotonoyl-CoA carboxylase subunit beta"/>
    <property type="match status" value="1"/>
</dbReference>
<dbReference type="Gene3D" id="3.90.226.10">
    <property type="entry name" value="2-enoyl-CoA Hydratase, Chain A, domain 1"/>
    <property type="match status" value="2"/>
</dbReference>
<dbReference type="InterPro" id="IPR034733">
    <property type="entry name" value="AcCoA_carboxyl_beta"/>
</dbReference>
<dbReference type="InterPro" id="IPR029045">
    <property type="entry name" value="ClpP/crotonase-like_dom_sf"/>
</dbReference>
<dbReference type="InterPro" id="IPR011763">
    <property type="entry name" value="COA_CT_C"/>
</dbReference>
<dbReference type="InterPro" id="IPR011762">
    <property type="entry name" value="COA_CT_N"/>
</dbReference>
<dbReference type="InterPro" id="IPR045190">
    <property type="entry name" value="MCCB/AccD1-like"/>
</dbReference>
<dbReference type="PANTHER" id="PTHR22855">
    <property type="entry name" value="ACETYL, PROPIONYL, PYRUVATE, AND GLUTACONYL CARBOXYLASE-RELATED"/>
    <property type="match status" value="1"/>
</dbReference>
<dbReference type="PANTHER" id="PTHR22855:SF13">
    <property type="entry name" value="METHYLCROTONOYL-COA CARBOXYLASE BETA CHAIN, MITOCHONDRIAL"/>
    <property type="match status" value="1"/>
</dbReference>
<dbReference type="Pfam" id="PF01039">
    <property type="entry name" value="Carboxyl_trans"/>
    <property type="match status" value="1"/>
</dbReference>
<dbReference type="SUPFAM" id="SSF52096">
    <property type="entry name" value="ClpP/crotonase"/>
    <property type="match status" value="2"/>
</dbReference>
<dbReference type="PROSITE" id="PS50989">
    <property type="entry name" value="COA_CT_CTER"/>
    <property type="match status" value="1"/>
</dbReference>
<dbReference type="PROSITE" id="PS50980">
    <property type="entry name" value="COA_CT_NTER"/>
    <property type="match status" value="1"/>
</dbReference>